<reference key="1">
    <citation type="journal article" date="1994" name="Mol. Phylogenet. Evol.">
        <title>Phylogenetic relationships of dennstaedtioid ferns: evidence from rbcL sequences.</title>
        <authorList>
            <person name="Wolf P.G."/>
            <person name="Soltis P.S."/>
            <person name="Soltis D.E."/>
        </authorList>
    </citation>
    <scope>NUCLEOTIDE SEQUENCE [GENOMIC DNA]</scope>
    <source>
        <tissue>Leaf</tissue>
    </source>
</reference>
<reference key="2">
    <citation type="journal article" date="1994" name="Proc. Natl. Acad. Sci. U.S.A.">
        <title>rbcL gene sequences provide evidence for the evolutionary lineages of leptosporangiate ferns.</title>
        <authorList>
            <person name="Hasebe M."/>
            <person name="Omori T."/>
            <person name="Nakazawa M."/>
            <person name="Sano T."/>
            <person name="Kato M."/>
            <person name="Iwatsuki K."/>
        </authorList>
    </citation>
    <scope>NUCLEOTIDE SEQUENCE [GENOMIC DNA] OF 12-433</scope>
    <source>
        <tissue>Leaf</tissue>
    </source>
</reference>
<gene>
    <name evidence="1" type="primary">rbcL</name>
</gene>
<name>RBL_DICAN</name>
<evidence type="ECO:0000255" key="1">
    <source>
        <dbReference type="HAMAP-Rule" id="MF_01338"/>
    </source>
</evidence>
<geneLocation type="chloroplast"/>
<accession>P48701</accession>
<dbReference type="EC" id="4.1.1.39" evidence="1"/>
<dbReference type="EMBL" id="U05919">
    <property type="protein sequence ID" value="AAC48944.1"/>
    <property type="molecule type" value="Genomic_DNA"/>
</dbReference>
<dbReference type="EMBL" id="U05618">
    <property type="protein sequence ID" value="AAA19902.1"/>
    <property type="molecule type" value="Genomic_DNA"/>
</dbReference>
<dbReference type="SMR" id="P48701"/>
<dbReference type="GO" id="GO:0009507">
    <property type="term" value="C:chloroplast"/>
    <property type="evidence" value="ECO:0007669"/>
    <property type="project" value="UniProtKB-SubCell"/>
</dbReference>
<dbReference type="GO" id="GO:0000287">
    <property type="term" value="F:magnesium ion binding"/>
    <property type="evidence" value="ECO:0007669"/>
    <property type="project" value="InterPro"/>
</dbReference>
<dbReference type="GO" id="GO:0004497">
    <property type="term" value="F:monooxygenase activity"/>
    <property type="evidence" value="ECO:0007669"/>
    <property type="project" value="UniProtKB-KW"/>
</dbReference>
<dbReference type="GO" id="GO:0016984">
    <property type="term" value="F:ribulose-bisphosphate carboxylase activity"/>
    <property type="evidence" value="ECO:0007669"/>
    <property type="project" value="UniProtKB-EC"/>
</dbReference>
<dbReference type="GO" id="GO:0009853">
    <property type="term" value="P:photorespiration"/>
    <property type="evidence" value="ECO:0007669"/>
    <property type="project" value="UniProtKB-KW"/>
</dbReference>
<dbReference type="GO" id="GO:0019253">
    <property type="term" value="P:reductive pentose-phosphate cycle"/>
    <property type="evidence" value="ECO:0007669"/>
    <property type="project" value="UniProtKB-KW"/>
</dbReference>
<dbReference type="CDD" id="cd08212">
    <property type="entry name" value="RuBisCO_large_I"/>
    <property type="match status" value="1"/>
</dbReference>
<dbReference type="FunFam" id="3.20.20.110:FF:000003">
    <property type="entry name" value="Ribulose bisphosphate carboxylase large chain"/>
    <property type="match status" value="1"/>
</dbReference>
<dbReference type="FunFam" id="3.30.70.150:FF:000001">
    <property type="entry name" value="Ribulose bisphosphate carboxylase large chain"/>
    <property type="match status" value="1"/>
</dbReference>
<dbReference type="Gene3D" id="3.20.20.110">
    <property type="entry name" value="Ribulose bisphosphate carboxylase, large subunit, C-terminal domain"/>
    <property type="match status" value="1"/>
</dbReference>
<dbReference type="Gene3D" id="3.30.70.150">
    <property type="entry name" value="RuBisCO large subunit, N-terminal domain"/>
    <property type="match status" value="1"/>
</dbReference>
<dbReference type="HAMAP" id="MF_01338">
    <property type="entry name" value="RuBisCO_L_type1"/>
    <property type="match status" value="1"/>
</dbReference>
<dbReference type="InterPro" id="IPR033966">
    <property type="entry name" value="RuBisCO"/>
</dbReference>
<dbReference type="InterPro" id="IPR020878">
    <property type="entry name" value="RuBisCo_large_chain_AS"/>
</dbReference>
<dbReference type="InterPro" id="IPR000685">
    <property type="entry name" value="RuBisCO_lsu_C"/>
</dbReference>
<dbReference type="InterPro" id="IPR036376">
    <property type="entry name" value="RuBisCO_lsu_C_sf"/>
</dbReference>
<dbReference type="InterPro" id="IPR017443">
    <property type="entry name" value="RuBisCO_lsu_fd_N"/>
</dbReference>
<dbReference type="InterPro" id="IPR036422">
    <property type="entry name" value="RuBisCO_lsu_N_sf"/>
</dbReference>
<dbReference type="InterPro" id="IPR020888">
    <property type="entry name" value="RuBisCO_lsuI"/>
</dbReference>
<dbReference type="NCBIfam" id="NF003252">
    <property type="entry name" value="PRK04208.1"/>
    <property type="match status" value="1"/>
</dbReference>
<dbReference type="PANTHER" id="PTHR42704">
    <property type="entry name" value="RIBULOSE BISPHOSPHATE CARBOXYLASE"/>
    <property type="match status" value="1"/>
</dbReference>
<dbReference type="PANTHER" id="PTHR42704:SF17">
    <property type="entry name" value="RIBULOSE BISPHOSPHATE CARBOXYLASE LARGE CHAIN"/>
    <property type="match status" value="1"/>
</dbReference>
<dbReference type="Pfam" id="PF00016">
    <property type="entry name" value="RuBisCO_large"/>
    <property type="match status" value="1"/>
</dbReference>
<dbReference type="Pfam" id="PF02788">
    <property type="entry name" value="RuBisCO_large_N"/>
    <property type="match status" value="1"/>
</dbReference>
<dbReference type="SFLD" id="SFLDG01052">
    <property type="entry name" value="RuBisCO"/>
    <property type="match status" value="1"/>
</dbReference>
<dbReference type="SFLD" id="SFLDS00014">
    <property type="entry name" value="RuBisCO"/>
    <property type="match status" value="1"/>
</dbReference>
<dbReference type="SFLD" id="SFLDG00301">
    <property type="entry name" value="RuBisCO-like_proteins"/>
    <property type="match status" value="1"/>
</dbReference>
<dbReference type="SUPFAM" id="SSF51649">
    <property type="entry name" value="RuBisCo, C-terminal domain"/>
    <property type="match status" value="1"/>
</dbReference>
<dbReference type="SUPFAM" id="SSF54966">
    <property type="entry name" value="RuBisCO, large subunit, small (N-terminal) domain"/>
    <property type="match status" value="1"/>
</dbReference>
<dbReference type="PROSITE" id="PS00157">
    <property type="entry name" value="RUBISCO_LARGE"/>
    <property type="match status" value="1"/>
</dbReference>
<sequence>VGFKAGVKDYRLTYYTPDYPTKDTDILAAFRMTPQPGVPPEEAGAAVAAESSTGTWTTVWTDGLTSLDRYKGRCYDIEPVSGEDKQYIAYLAYPLDLFEEGSVTNLFTSIVGNVFGFKALRALRLEDLRIPPAYSKTFIGPPHGIQVERDKLNKYGRPLLGCTIKPKLGLSAKNYGRAVYECLRGGLDFTKDDENVNSQPFMRWRDRFLFVAEALFKAQAETGEIKGHYLNATAGTCEEMMKRAVFARELGAPIVMHDYLTGGFTANTSLAFYCRDNGLLLHIHRAMHAVIDRQRNHGIHFRVLAKALRMSGGDHIHAGTVVGKLEGEREVTLGFVDLLRDDYIEKDRSRGIYFTQDWVSMPGVLPVASGGIHVWHMPALTEIFGDDSVLQFGGGTLGHPWGNAPGAVANRVASEACVQARNEGRDLAREGNEIIREACK</sequence>
<keyword id="KW-0113">Calvin cycle</keyword>
<keyword id="KW-0120">Carbon dioxide fixation</keyword>
<keyword id="KW-0150">Chloroplast</keyword>
<keyword id="KW-1015">Disulfide bond</keyword>
<keyword id="KW-0456">Lyase</keyword>
<keyword id="KW-0460">Magnesium</keyword>
<keyword id="KW-0479">Metal-binding</keyword>
<keyword id="KW-0488">Methylation</keyword>
<keyword id="KW-0503">Monooxygenase</keyword>
<keyword id="KW-0560">Oxidoreductase</keyword>
<keyword id="KW-0601">Photorespiration</keyword>
<keyword id="KW-0602">Photosynthesis</keyword>
<keyword id="KW-0934">Plastid</keyword>
<protein>
    <recommendedName>
        <fullName evidence="1">Ribulose bisphosphate carboxylase large chain</fullName>
        <shortName evidence="1">RuBisCO large subunit</shortName>
        <ecNumber evidence="1">4.1.1.39</ecNumber>
    </recommendedName>
</protein>
<feature type="chain" id="PRO_0000062442" description="Ribulose bisphosphate carboxylase large chain">
    <location>
        <begin position="1" status="less than"/>
        <end position="440" status="greater than"/>
    </location>
</feature>
<feature type="active site" description="Proton acceptor" evidence="1">
    <location>
        <position position="165"/>
    </location>
</feature>
<feature type="active site" description="Proton acceptor" evidence="1">
    <location>
        <position position="284"/>
    </location>
</feature>
<feature type="binding site" description="in homodimeric partner" evidence="1">
    <location>
        <position position="113"/>
    </location>
    <ligand>
        <name>substrate</name>
    </ligand>
</feature>
<feature type="binding site" evidence="1">
    <location>
        <position position="163"/>
    </location>
    <ligand>
        <name>substrate</name>
    </ligand>
</feature>
<feature type="binding site" evidence="1">
    <location>
        <position position="167"/>
    </location>
    <ligand>
        <name>substrate</name>
    </ligand>
</feature>
<feature type="binding site" description="via carbamate group" evidence="1">
    <location>
        <position position="191"/>
    </location>
    <ligand>
        <name>Mg(2+)</name>
        <dbReference type="ChEBI" id="CHEBI:18420"/>
    </ligand>
</feature>
<feature type="binding site" evidence="1">
    <location>
        <position position="193"/>
    </location>
    <ligand>
        <name>Mg(2+)</name>
        <dbReference type="ChEBI" id="CHEBI:18420"/>
    </ligand>
</feature>
<feature type="binding site" evidence="1">
    <location>
        <position position="194"/>
    </location>
    <ligand>
        <name>Mg(2+)</name>
        <dbReference type="ChEBI" id="CHEBI:18420"/>
    </ligand>
</feature>
<feature type="binding site" evidence="1">
    <location>
        <position position="285"/>
    </location>
    <ligand>
        <name>substrate</name>
    </ligand>
</feature>
<feature type="binding site" evidence="1">
    <location>
        <position position="317"/>
    </location>
    <ligand>
        <name>substrate</name>
    </ligand>
</feature>
<feature type="binding site" evidence="1">
    <location>
        <position position="369"/>
    </location>
    <ligand>
        <name>substrate</name>
    </ligand>
</feature>
<feature type="site" description="Transition state stabilizer" evidence="1">
    <location>
        <position position="324"/>
    </location>
</feature>
<feature type="modified residue" description="N6,N6,N6-trimethyllysine" evidence="1">
    <location>
        <position position="4"/>
    </location>
</feature>
<feature type="modified residue" description="N6-carboxylysine" evidence="1">
    <location>
        <position position="191"/>
    </location>
</feature>
<feature type="disulfide bond" description="Interchain; in linked form" evidence="1">
    <location>
        <position position="237"/>
    </location>
</feature>
<feature type="non-terminal residue">
    <location>
        <position position="1"/>
    </location>
</feature>
<feature type="non-terminal residue">
    <location>
        <position position="440"/>
    </location>
</feature>
<comment type="function">
    <text evidence="1">RuBisCO catalyzes two reactions: the carboxylation of D-ribulose 1,5-bisphosphate, the primary event in carbon dioxide fixation, as well as the oxidative fragmentation of the pentose substrate in the photorespiration process. Both reactions occur simultaneously and in competition at the same active site.</text>
</comment>
<comment type="catalytic activity">
    <reaction evidence="1">
        <text>2 (2R)-3-phosphoglycerate + 2 H(+) = D-ribulose 1,5-bisphosphate + CO2 + H2O</text>
        <dbReference type="Rhea" id="RHEA:23124"/>
        <dbReference type="ChEBI" id="CHEBI:15377"/>
        <dbReference type="ChEBI" id="CHEBI:15378"/>
        <dbReference type="ChEBI" id="CHEBI:16526"/>
        <dbReference type="ChEBI" id="CHEBI:57870"/>
        <dbReference type="ChEBI" id="CHEBI:58272"/>
        <dbReference type="EC" id="4.1.1.39"/>
    </reaction>
</comment>
<comment type="catalytic activity">
    <reaction evidence="1">
        <text>D-ribulose 1,5-bisphosphate + O2 = 2-phosphoglycolate + (2R)-3-phosphoglycerate + 2 H(+)</text>
        <dbReference type="Rhea" id="RHEA:36631"/>
        <dbReference type="ChEBI" id="CHEBI:15378"/>
        <dbReference type="ChEBI" id="CHEBI:15379"/>
        <dbReference type="ChEBI" id="CHEBI:57870"/>
        <dbReference type="ChEBI" id="CHEBI:58033"/>
        <dbReference type="ChEBI" id="CHEBI:58272"/>
    </reaction>
</comment>
<comment type="cofactor">
    <cofactor evidence="1">
        <name>Mg(2+)</name>
        <dbReference type="ChEBI" id="CHEBI:18420"/>
    </cofactor>
    <text evidence="1">Binds 1 Mg(2+) ion per subunit.</text>
</comment>
<comment type="subunit">
    <text evidence="1">Heterohexadecamer of 8 large chains and 8 small chains; disulfide-linked. The disulfide link is formed within the large subunit homodimers.</text>
</comment>
<comment type="subcellular location">
    <subcellularLocation>
        <location>Plastid</location>
        <location>Chloroplast</location>
    </subcellularLocation>
</comment>
<comment type="PTM">
    <text evidence="1">The disulfide bond which can form in the large chain dimeric partners within the hexadecamer appears to be associated with oxidative stress and protein turnover.</text>
</comment>
<comment type="miscellaneous">
    <text evidence="1">The basic functional RuBisCO is composed of a large chain homodimer in a 'head-to-tail' conformation. In form I RuBisCO this homodimer is arranged in a barrel-like tetramer with the small subunits forming a tetrameric 'cap' on each end of the 'barrel'.</text>
</comment>
<comment type="similarity">
    <text evidence="1">Belongs to the RuBisCO large chain family. Type I subfamily.</text>
</comment>
<proteinExistence type="inferred from homology"/>
<organism>
    <name type="scientific">Dicksonia antarctica</name>
    <name type="common">Australian tree fern</name>
    <dbReference type="NCBI Taxonomy" id="3271"/>
    <lineage>
        <taxon>Eukaryota</taxon>
        <taxon>Viridiplantae</taxon>
        <taxon>Streptophyta</taxon>
        <taxon>Embryophyta</taxon>
        <taxon>Tracheophyta</taxon>
        <taxon>Polypodiopsida</taxon>
        <taxon>Polypodiidae</taxon>
        <taxon>Cyatheales</taxon>
        <taxon>Dicksoniaceae</taxon>
        <taxon>Dicksonia</taxon>
    </lineage>
</organism>